<protein>
    <recommendedName>
        <fullName evidence="1">Adenylyl-sulfate kinase</fullName>
        <ecNumber evidence="1">2.7.1.25</ecNumber>
    </recommendedName>
    <alternativeName>
        <fullName evidence="1">APS kinase</fullName>
    </alternativeName>
    <alternativeName>
        <fullName evidence="1">ATP adenosine-5'-phosphosulfate 3'-phosphotransferase</fullName>
    </alternativeName>
    <alternativeName>
        <fullName evidence="1">Adenosine-5'-phosphosulfate kinase</fullName>
    </alternativeName>
</protein>
<name>CYSC_SALPK</name>
<evidence type="ECO:0000255" key="1">
    <source>
        <dbReference type="HAMAP-Rule" id="MF_00065"/>
    </source>
</evidence>
<keyword id="KW-0067">ATP-binding</keyword>
<keyword id="KW-0418">Kinase</keyword>
<keyword id="KW-0547">Nucleotide-binding</keyword>
<keyword id="KW-0597">Phosphoprotein</keyword>
<keyword id="KW-0808">Transferase</keyword>
<feature type="chain" id="PRO_1000092250" description="Adenylyl-sulfate kinase">
    <location>
        <begin position="1"/>
        <end position="201"/>
    </location>
</feature>
<feature type="active site" description="Phosphoserine intermediate" evidence="1">
    <location>
        <position position="109"/>
    </location>
</feature>
<feature type="binding site" evidence="1">
    <location>
        <begin position="35"/>
        <end position="42"/>
    </location>
    <ligand>
        <name>ATP</name>
        <dbReference type="ChEBI" id="CHEBI:30616"/>
    </ligand>
</feature>
<gene>
    <name evidence="1" type="primary">cysC</name>
    <name type="ordered locus">SSPA2601</name>
</gene>
<accession>B5BEY7</accession>
<dbReference type="EC" id="2.7.1.25" evidence="1"/>
<dbReference type="EMBL" id="FM200053">
    <property type="protein sequence ID" value="CAR60839.1"/>
    <property type="molecule type" value="Genomic_DNA"/>
</dbReference>
<dbReference type="RefSeq" id="WP_001173658.1">
    <property type="nucleotide sequence ID" value="NC_011147.1"/>
</dbReference>
<dbReference type="SMR" id="B5BEY7"/>
<dbReference type="KEGG" id="sek:SSPA2601"/>
<dbReference type="HOGENOM" id="CLU_046932_1_0_6"/>
<dbReference type="UniPathway" id="UPA00140">
    <property type="reaction ID" value="UER00205"/>
</dbReference>
<dbReference type="Proteomes" id="UP000001869">
    <property type="component" value="Chromosome"/>
</dbReference>
<dbReference type="GO" id="GO:0004020">
    <property type="term" value="F:adenylylsulfate kinase activity"/>
    <property type="evidence" value="ECO:0007669"/>
    <property type="project" value="UniProtKB-UniRule"/>
</dbReference>
<dbReference type="GO" id="GO:0005524">
    <property type="term" value="F:ATP binding"/>
    <property type="evidence" value="ECO:0007669"/>
    <property type="project" value="UniProtKB-UniRule"/>
</dbReference>
<dbReference type="GO" id="GO:0070814">
    <property type="term" value="P:hydrogen sulfide biosynthetic process"/>
    <property type="evidence" value="ECO:0007669"/>
    <property type="project" value="UniProtKB-UniRule"/>
</dbReference>
<dbReference type="GO" id="GO:0000103">
    <property type="term" value="P:sulfate assimilation"/>
    <property type="evidence" value="ECO:0007669"/>
    <property type="project" value="UniProtKB-UniRule"/>
</dbReference>
<dbReference type="CDD" id="cd02027">
    <property type="entry name" value="APSK"/>
    <property type="match status" value="1"/>
</dbReference>
<dbReference type="FunFam" id="3.40.50.300:FF:000212">
    <property type="entry name" value="Adenylyl-sulfate kinase"/>
    <property type="match status" value="1"/>
</dbReference>
<dbReference type="Gene3D" id="3.40.50.300">
    <property type="entry name" value="P-loop containing nucleotide triphosphate hydrolases"/>
    <property type="match status" value="1"/>
</dbReference>
<dbReference type="HAMAP" id="MF_00065">
    <property type="entry name" value="Adenylyl_sulf_kinase"/>
    <property type="match status" value="1"/>
</dbReference>
<dbReference type="InterPro" id="IPR002891">
    <property type="entry name" value="APS_kinase"/>
</dbReference>
<dbReference type="InterPro" id="IPR027417">
    <property type="entry name" value="P-loop_NTPase"/>
</dbReference>
<dbReference type="NCBIfam" id="TIGR00455">
    <property type="entry name" value="apsK"/>
    <property type="match status" value="1"/>
</dbReference>
<dbReference type="NCBIfam" id="NF003013">
    <property type="entry name" value="PRK03846.1"/>
    <property type="match status" value="1"/>
</dbReference>
<dbReference type="PANTHER" id="PTHR11055:SF63">
    <property type="entry name" value="ADENYLYL-SULFATE KINASE 1, CHLOROPLASTIC"/>
    <property type="match status" value="1"/>
</dbReference>
<dbReference type="PANTHER" id="PTHR11055">
    <property type="entry name" value="BIFUNCTIONAL 3'-PHOSPHOADENOSINE 5'-PHOSPHOSULFATE SYNTHASE"/>
    <property type="match status" value="1"/>
</dbReference>
<dbReference type="Pfam" id="PF01583">
    <property type="entry name" value="APS_kinase"/>
    <property type="match status" value="1"/>
</dbReference>
<dbReference type="SUPFAM" id="SSF52540">
    <property type="entry name" value="P-loop containing nucleoside triphosphate hydrolases"/>
    <property type="match status" value="1"/>
</dbReference>
<organism>
    <name type="scientific">Salmonella paratyphi A (strain AKU_12601)</name>
    <dbReference type="NCBI Taxonomy" id="554290"/>
    <lineage>
        <taxon>Bacteria</taxon>
        <taxon>Pseudomonadati</taxon>
        <taxon>Pseudomonadota</taxon>
        <taxon>Gammaproteobacteria</taxon>
        <taxon>Enterobacterales</taxon>
        <taxon>Enterobacteriaceae</taxon>
        <taxon>Salmonella</taxon>
    </lineage>
</organism>
<comment type="function">
    <text evidence="1">Catalyzes the synthesis of activated sulfate.</text>
</comment>
<comment type="catalytic activity">
    <reaction evidence="1">
        <text>adenosine 5'-phosphosulfate + ATP = 3'-phosphoadenylyl sulfate + ADP + H(+)</text>
        <dbReference type="Rhea" id="RHEA:24152"/>
        <dbReference type="ChEBI" id="CHEBI:15378"/>
        <dbReference type="ChEBI" id="CHEBI:30616"/>
        <dbReference type="ChEBI" id="CHEBI:58243"/>
        <dbReference type="ChEBI" id="CHEBI:58339"/>
        <dbReference type="ChEBI" id="CHEBI:456216"/>
        <dbReference type="EC" id="2.7.1.25"/>
    </reaction>
</comment>
<comment type="pathway">
    <text evidence="1">Sulfur metabolism; hydrogen sulfide biosynthesis; sulfite from sulfate: step 2/3.</text>
</comment>
<comment type="similarity">
    <text evidence="1">Belongs to the APS kinase family.</text>
</comment>
<proteinExistence type="inferred from homology"/>
<sequence length="201" mass="22417">MALHDENVVWHSHPVTVAAREQLHGHRGVMLWFTGLSGSGKSTVAGALEEALHQRGVSTYLLDGDNVRHGLCRDLGFSDADRQENIRRVGEVASLMADAGLIVLTAFISPHRAERQLVKERVGHDRFIEIYVNTPLAICEQRDPKGLYKKARAGELRNFTGIDAIYEAPDSPQVHLNGEQLVTNLVSQLLDLLRRRDIIRS</sequence>
<reference key="1">
    <citation type="journal article" date="2009" name="BMC Genomics">
        <title>Pseudogene accumulation in the evolutionary histories of Salmonella enterica serovars Paratyphi A and Typhi.</title>
        <authorList>
            <person name="Holt K.E."/>
            <person name="Thomson N.R."/>
            <person name="Wain J."/>
            <person name="Langridge G.C."/>
            <person name="Hasan R."/>
            <person name="Bhutta Z.A."/>
            <person name="Quail M.A."/>
            <person name="Norbertczak H."/>
            <person name="Walker D."/>
            <person name="Simmonds M."/>
            <person name="White B."/>
            <person name="Bason N."/>
            <person name="Mungall K."/>
            <person name="Dougan G."/>
            <person name="Parkhill J."/>
        </authorList>
    </citation>
    <scope>NUCLEOTIDE SEQUENCE [LARGE SCALE GENOMIC DNA]</scope>
    <source>
        <strain>AKU_12601</strain>
    </source>
</reference>